<comment type="function">
    <text evidence="1">Involved in targeting and insertion of nascent membrane proteins into the cytoplasmic membrane. Binds to the hydrophobic signal sequence of the ribosome-nascent chain (RNC) as it emerges from the ribosomes. The SRP-RNC complex is then targeted to the cytoplasmic membrane where it interacts with the SRP receptor FtsY.</text>
</comment>
<comment type="catalytic activity">
    <reaction evidence="1">
        <text>GTP + H2O = GDP + phosphate + H(+)</text>
        <dbReference type="Rhea" id="RHEA:19669"/>
        <dbReference type="ChEBI" id="CHEBI:15377"/>
        <dbReference type="ChEBI" id="CHEBI:15378"/>
        <dbReference type="ChEBI" id="CHEBI:37565"/>
        <dbReference type="ChEBI" id="CHEBI:43474"/>
        <dbReference type="ChEBI" id="CHEBI:58189"/>
        <dbReference type="EC" id="3.6.5.4"/>
    </reaction>
</comment>
<comment type="subunit">
    <text evidence="1">Part of the signal recognition particle protein translocation system, which is composed of SRP and FtsY. Archaeal SRP consists of a 7S RNA molecule of 300 nucleotides and two protein subunits: SRP54 and SRP19.</text>
</comment>
<comment type="subcellular location">
    <subcellularLocation>
        <location evidence="1">Cytoplasm</location>
    </subcellularLocation>
    <text evidence="1">The SRP-RNC complex is targeted to the cytoplasmic membrane.</text>
</comment>
<comment type="domain">
    <text evidence="1">Composed of three domains: the N-terminal N domain, which is responsible for interactions with the ribosome, the central G domain, which binds GTP, and the C-terminal M domain, which binds the RNA and the signal sequence of the RNC.</text>
</comment>
<comment type="similarity">
    <text evidence="1">Belongs to the GTP-binding SRP family. SRP54 subfamily.</text>
</comment>
<sequence>MLENIRDAVRKFLTGSTPYEKAVDEFVKELQKSLISSDVNVKLVFSLTAKIKERLNKEKPPSVLERKEWFISIVYDELSKLFGGDKEPNVNPTKLPFIIMLVGVQGSGKTTTSGKLAYFYKRRGYKVGLVAADVYRPAAYDQLLQLGNQIGVPVYGEPNNQNAIEIAKKGVDTFVKNKMDIIIVDTAGRHGYGEETKLLEEMKEIYEALKPDDVILVIDASIGQKAYDLASRFHQASPIGSIIITKMDGTAKGGGALSAVAATGATIKFIGTGEKIDELEIFNAKRYVSRILGMGDIESILEKVKGLEEYEKIQKKMEDVMEGKGKLTLRDVYAQIMALRKMGPLSKVLQHIPGLGVMLPTPSEDQLKLGEEKIRRWLAALNSMTYKELENPSIIDKSRMRRIAEGSGLEVEDVRELLEWYNNMNKLLKMVKRRRGSIDKLFGGKIG</sequence>
<dbReference type="EC" id="3.6.5.4" evidence="1"/>
<dbReference type="EMBL" id="CP001402">
    <property type="protein sequence ID" value="ACR41840.1"/>
    <property type="molecule type" value="Genomic_DNA"/>
</dbReference>
<dbReference type="RefSeq" id="WP_012711260.1">
    <property type="nucleotide sequence ID" value="NC_012726.1"/>
</dbReference>
<dbReference type="SMR" id="C4KGX6"/>
<dbReference type="KEGG" id="sid:M164_1236"/>
<dbReference type="HOGENOM" id="CLU_009301_6_0_2"/>
<dbReference type="Proteomes" id="UP000001479">
    <property type="component" value="Chromosome"/>
</dbReference>
<dbReference type="GO" id="GO:0048500">
    <property type="term" value="C:signal recognition particle"/>
    <property type="evidence" value="ECO:0007669"/>
    <property type="project" value="UniProtKB-UniRule"/>
</dbReference>
<dbReference type="GO" id="GO:0008312">
    <property type="term" value="F:7S RNA binding"/>
    <property type="evidence" value="ECO:0007669"/>
    <property type="project" value="UniProtKB-UniRule"/>
</dbReference>
<dbReference type="GO" id="GO:0016887">
    <property type="term" value="F:ATP hydrolysis activity"/>
    <property type="evidence" value="ECO:0007669"/>
    <property type="project" value="InterPro"/>
</dbReference>
<dbReference type="GO" id="GO:0005525">
    <property type="term" value="F:GTP binding"/>
    <property type="evidence" value="ECO:0007669"/>
    <property type="project" value="UniProtKB-UniRule"/>
</dbReference>
<dbReference type="GO" id="GO:0003924">
    <property type="term" value="F:GTPase activity"/>
    <property type="evidence" value="ECO:0007669"/>
    <property type="project" value="UniProtKB-UniRule"/>
</dbReference>
<dbReference type="GO" id="GO:0006614">
    <property type="term" value="P:SRP-dependent cotranslational protein targeting to membrane"/>
    <property type="evidence" value="ECO:0007669"/>
    <property type="project" value="InterPro"/>
</dbReference>
<dbReference type="CDD" id="cd17875">
    <property type="entry name" value="SRP54_G"/>
    <property type="match status" value="1"/>
</dbReference>
<dbReference type="FunFam" id="3.40.50.300:FF:000022">
    <property type="entry name" value="Signal recognition particle 54 kDa subunit"/>
    <property type="match status" value="1"/>
</dbReference>
<dbReference type="Gene3D" id="3.40.50.300">
    <property type="entry name" value="P-loop containing nucleotide triphosphate hydrolases"/>
    <property type="match status" value="1"/>
</dbReference>
<dbReference type="Gene3D" id="1.20.120.140">
    <property type="entry name" value="Signal recognition particle SRP54, nucleotide-binding domain"/>
    <property type="match status" value="1"/>
</dbReference>
<dbReference type="Gene3D" id="1.10.260.30">
    <property type="entry name" value="Signal recognition particle, SRP54 subunit, M-domain"/>
    <property type="match status" value="1"/>
</dbReference>
<dbReference type="HAMAP" id="MF_00306">
    <property type="entry name" value="SRP54"/>
    <property type="match status" value="1"/>
</dbReference>
<dbReference type="InterPro" id="IPR003593">
    <property type="entry name" value="AAA+_ATPase"/>
</dbReference>
<dbReference type="InterPro" id="IPR027417">
    <property type="entry name" value="P-loop_NTPase"/>
</dbReference>
<dbReference type="InterPro" id="IPR036891">
    <property type="entry name" value="Signal_recog_part_SRP54_M_sf"/>
</dbReference>
<dbReference type="InterPro" id="IPR013822">
    <property type="entry name" value="Signal_recog_particl_SRP54_hlx"/>
</dbReference>
<dbReference type="InterPro" id="IPR004125">
    <property type="entry name" value="Signal_recog_particle_SRP54_M"/>
</dbReference>
<dbReference type="InterPro" id="IPR036225">
    <property type="entry name" value="SRP/SRP_N"/>
</dbReference>
<dbReference type="InterPro" id="IPR022941">
    <property type="entry name" value="SRP54"/>
</dbReference>
<dbReference type="InterPro" id="IPR000897">
    <property type="entry name" value="SRP54_GTPase_dom"/>
</dbReference>
<dbReference type="InterPro" id="IPR042101">
    <property type="entry name" value="SRP54_N_sf"/>
</dbReference>
<dbReference type="PANTHER" id="PTHR11564">
    <property type="entry name" value="SIGNAL RECOGNITION PARTICLE 54K PROTEIN SRP54"/>
    <property type="match status" value="1"/>
</dbReference>
<dbReference type="PANTHER" id="PTHR11564:SF5">
    <property type="entry name" value="SIGNAL RECOGNITION PARTICLE SUBUNIT SRP54"/>
    <property type="match status" value="1"/>
</dbReference>
<dbReference type="Pfam" id="PF00448">
    <property type="entry name" value="SRP54"/>
    <property type="match status" value="1"/>
</dbReference>
<dbReference type="Pfam" id="PF02881">
    <property type="entry name" value="SRP54_N"/>
    <property type="match status" value="1"/>
</dbReference>
<dbReference type="Pfam" id="PF02978">
    <property type="entry name" value="SRP_SPB"/>
    <property type="match status" value="1"/>
</dbReference>
<dbReference type="SMART" id="SM00382">
    <property type="entry name" value="AAA"/>
    <property type="match status" value="1"/>
</dbReference>
<dbReference type="SMART" id="SM00962">
    <property type="entry name" value="SRP54"/>
    <property type="match status" value="1"/>
</dbReference>
<dbReference type="SMART" id="SM00963">
    <property type="entry name" value="SRP54_N"/>
    <property type="match status" value="1"/>
</dbReference>
<dbReference type="SUPFAM" id="SSF47364">
    <property type="entry name" value="Domain of the SRP/SRP receptor G-proteins"/>
    <property type="match status" value="1"/>
</dbReference>
<dbReference type="SUPFAM" id="SSF52540">
    <property type="entry name" value="P-loop containing nucleoside triphosphate hydrolases"/>
    <property type="match status" value="1"/>
</dbReference>
<dbReference type="SUPFAM" id="SSF47446">
    <property type="entry name" value="Signal peptide-binding domain"/>
    <property type="match status" value="1"/>
</dbReference>
<organism>
    <name type="scientific">Saccharolobus islandicus (strain M.16.4 / Kamchatka #3)</name>
    <name type="common">Sulfolobus islandicus</name>
    <dbReference type="NCBI Taxonomy" id="426118"/>
    <lineage>
        <taxon>Archaea</taxon>
        <taxon>Thermoproteota</taxon>
        <taxon>Thermoprotei</taxon>
        <taxon>Sulfolobales</taxon>
        <taxon>Sulfolobaceae</taxon>
        <taxon>Saccharolobus</taxon>
    </lineage>
</organism>
<keyword id="KW-0963">Cytoplasm</keyword>
<keyword id="KW-0342">GTP-binding</keyword>
<keyword id="KW-0378">Hydrolase</keyword>
<keyword id="KW-0547">Nucleotide-binding</keyword>
<keyword id="KW-0687">Ribonucleoprotein</keyword>
<keyword id="KW-0694">RNA-binding</keyword>
<keyword id="KW-0733">Signal recognition particle</keyword>
<name>SRP54_SACI6</name>
<protein>
    <recommendedName>
        <fullName evidence="1">Signal recognition particle 54 kDa protein</fullName>
        <shortName evidence="1">SRP54</shortName>
        <ecNumber evidence="1">3.6.5.4</ecNumber>
    </recommendedName>
</protein>
<proteinExistence type="inferred from homology"/>
<feature type="chain" id="PRO_1000205012" description="Signal recognition particle 54 kDa protein">
    <location>
        <begin position="1"/>
        <end position="447"/>
    </location>
</feature>
<feature type="binding site" evidence="1">
    <location>
        <begin position="103"/>
        <end position="110"/>
    </location>
    <ligand>
        <name>GTP</name>
        <dbReference type="ChEBI" id="CHEBI:37565"/>
    </ligand>
</feature>
<feature type="binding site" evidence="1">
    <location>
        <begin position="185"/>
        <end position="189"/>
    </location>
    <ligand>
        <name>GTP</name>
        <dbReference type="ChEBI" id="CHEBI:37565"/>
    </ligand>
</feature>
<feature type="binding site" evidence="1">
    <location>
        <begin position="245"/>
        <end position="248"/>
    </location>
    <ligand>
        <name>GTP</name>
        <dbReference type="ChEBI" id="CHEBI:37565"/>
    </ligand>
</feature>
<evidence type="ECO:0000255" key="1">
    <source>
        <dbReference type="HAMAP-Rule" id="MF_00306"/>
    </source>
</evidence>
<accession>C4KGX6</accession>
<reference key="1">
    <citation type="journal article" date="2009" name="Proc. Natl. Acad. Sci. U.S.A.">
        <title>Biogeography of the Sulfolobus islandicus pan-genome.</title>
        <authorList>
            <person name="Reno M.L."/>
            <person name="Held N.L."/>
            <person name="Fields C.J."/>
            <person name="Burke P.V."/>
            <person name="Whitaker R.J."/>
        </authorList>
    </citation>
    <scope>NUCLEOTIDE SEQUENCE [LARGE SCALE GENOMIC DNA]</scope>
    <source>
        <strain>M.16.4 / Kamchatka #3</strain>
    </source>
</reference>
<gene>
    <name evidence="1" type="primary">srp54</name>
    <name type="ordered locus">M164_1236</name>
</gene>